<accession>Q9JHG3</accession>
<accession>Q9ESK2</accession>
<protein>
    <recommendedName>
        <fullName>Apelin receptor</fullName>
    </recommendedName>
    <alternativeName>
        <fullName>Angiotensin receptor-like 1</fullName>
    </alternativeName>
    <alternativeName>
        <fullName>B78</fullName>
    </alternativeName>
    <alternativeName>
        <fullName>G-protein coupled receptor APJ</fullName>
    </alternativeName>
    <alternativeName>
        <fullName>GPCR34</fullName>
    </alternativeName>
</protein>
<organism>
    <name type="scientific">Rattus norvegicus</name>
    <name type="common">Rat</name>
    <dbReference type="NCBI Taxonomy" id="10116"/>
    <lineage>
        <taxon>Eukaryota</taxon>
        <taxon>Metazoa</taxon>
        <taxon>Chordata</taxon>
        <taxon>Craniata</taxon>
        <taxon>Vertebrata</taxon>
        <taxon>Euteleostomi</taxon>
        <taxon>Mammalia</taxon>
        <taxon>Eutheria</taxon>
        <taxon>Euarchontoglires</taxon>
        <taxon>Glires</taxon>
        <taxon>Rodentia</taxon>
        <taxon>Myomorpha</taxon>
        <taxon>Muroidea</taxon>
        <taxon>Muridae</taxon>
        <taxon>Murinae</taxon>
        <taxon>Rattus</taxon>
    </lineage>
</organism>
<gene>
    <name evidence="11" type="primary">Aplnr</name>
    <name type="synonym">Agtrl1</name>
    <name type="synonym">Apj</name>
</gene>
<name>APJ_RAT</name>
<comment type="function">
    <text evidence="1 3 4 8 9">G protein-coupled receptor for peptide hormones apelin (APLN) and apelin receptor early endogenous ligand (APELA/ELA), that plays a role in the regulation of normal cardiovascular function and fluid homeostasis (PubMed:11359874). When acting as apelin receptor, activates both G(i) protein pathway that inhibits adenylate cyclase activity, and the beta-arrestin pathway that promotes internalization of the receptor. APLNR/APJ also functions as mechanoreceptor that is activated by pathological stimuli in a G-protein-independent fashion to induce beta-arrestin signaling, hence eliciting cardiac hypertrophy. However, the presence of apelin ligand blunts cardiac hypertrophic induction from APLNR/APJ on response to pathological stimuli (PubMed:22810587). Plays a key role in early development such as gastrulation, blood vessels formation and heart morphogenesis by acting as a APELA receptor (By similarity). May promote angioblast migration toward the embryonic midline, i.e. the position of the future vessel formation, during vasculogenesis (By similarity). Promotes sinus venosus (SV)-derived endothelial cells migration into the developing heart to promote coronary blood vessel development (By similarity). Also plays a role in various processes in adults such as regulation of blood vessel formation, blood pressure, heart contractility and heart failure (By similarity).</text>
</comment>
<comment type="subunit">
    <text evidence="1">Homodimer; dimerization inhibits APLNR-mediated G protein and beta-arrestin signaling pathways compared to monomeric APLNR.</text>
</comment>
<comment type="subcellular location">
    <subcellularLocation>
        <location evidence="8">Cell membrane</location>
        <topology evidence="2">Multi-pass membrane protein</topology>
    </subcellularLocation>
    <text evidence="1 8">After exposure to apelin (APLN), internalized from the cell surface into an endosomal recycling compartment, from where it is recycled to the cell membrane (PubMed:11359874). After exposure to apelin receptor early endogenous ligand (APELA), internalized from the cell surface into an endosomal recycling compartment, from where it is recycled to the cell membrane (By similarity).</text>
</comment>
<comment type="tissue specificity">
    <text evidence="8">Widely expressed. Highest expression in the lung, lower in the heart, placenta, ovary, skeletal muscle, mammary gland, kidney and several structures in the brain as the hypothalamus (supraoptic and periventricular nuclei), pituitary, olfactory bulb and pineal gland.</text>
</comment>
<comment type="developmental stage">
    <text evidence="8">Higher expression in neonates than in adult.</text>
</comment>
<comment type="domain">
    <text evidence="1">The hydrogen bond between Asn-44 and Asp-73 is crucial for beta-arrestin signaling induced by APLN/apelin-13.</text>
</comment>
<comment type="similarity">
    <text evidence="6">Belongs to the G-protein coupled receptor 1 family.</text>
</comment>
<keyword id="KW-0037">Angiogenesis</keyword>
<keyword id="KW-1003">Cell membrane</keyword>
<keyword id="KW-0217">Developmental protein</keyword>
<keyword id="KW-1015">Disulfide bond</keyword>
<keyword id="KW-0297">G-protein coupled receptor</keyword>
<keyword id="KW-0306">Gastrulation</keyword>
<keyword id="KW-0325">Glycoprotein</keyword>
<keyword id="KW-0472">Membrane</keyword>
<keyword id="KW-0675">Receptor</keyword>
<keyword id="KW-1185">Reference proteome</keyword>
<keyword id="KW-0807">Transducer</keyword>
<keyword id="KW-0812">Transmembrane</keyword>
<keyword id="KW-1133">Transmembrane helix</keyword>
<evidence type="ECO:0000250" key="1">
    <source>
        <dbReference type="UniProtKB" id="P35414"/>
    </source>
</evidence>
<evidence type="ECO:0000250" key="2">
    <source>
        <dbReference type="UniProtKB" id="P79960"/>
    </source>
</evidence>
<evidence type="ECO:0000250" key="3">
    <source>
        <dbReference type="UniProtKB" id="Q7SZP9"/>
    </source>
</evidence>
<evidence type="ECO:0000250" key="4">
    <source>
        <dbReference type="UniProtKB" id="Q9WV08"/>
    </source>
</evidence>
<evidence type="ECO:0000255" key="5"/>
<evidence type="ECO:0000255" key="6">
    <source>
        <dbReference type="PROSITE-ProRule" id="PRU00521"/>
    </source>
</evidence>
<evidence type="ECO:0000256" key="7">
    <source>
        <dbReference type="SAM" id="MobiDB-lite"/>
    </source>
</evidence>
<evidence type="ECO:0000269" key="8">
    <source>
    </source>
</evidence>
<evidence type="ECO:0000269" key="9">
    <source>
    </source>
</evidence>
<evidence type="ECO:0000305" key="10"/>
<evidence type="ECO:0000312" key="11">
    <source>
        <dbReference type="RGD" id="621645"/>
    </source>
</evidence>
<dbReference type="EMBL" id="AB033170">
    <property type="protein sequence ID" value="BAA95002.1"/>
    <property type="molecule type" value="mRNA"/>
</dbReference>
<dbReference type="EMBL" id="AF184883">
    <property type="protein sequence ID" value="AAF80860.1"/>
    <property type="molecule type" value="mRNA"/>
</dbReference>
<dbReference type="EMBL" id="BC072494">
    <property type="protein sequence ID" value="AAH72494.1"/>
    <property type="molecule type" value="mRNA"/>
</dbReference>
<dbReference type="EMBL" id="AF090346">
    <property type="protein sequence ID" value="AAG24468.1"/>
    <property type="molecule type" value="mRNA"/>
</dbReference>
<dbReference type="RefSeq" id="NP_112639.1">
    <property type="nucleotide sequence ID" value="NM_031349.2"/>
</dbReference>
<dbReference type="SMR" id="Q9JHG3"/>
<dbReference type="CORUM" id="Q9JHG3"/>
<dbReference type="FunCoup" id="Q9JHG3">
    <property type="interactions" value="206"/>
</dbReference>
<dbReference type="STRING" id="10116.ENSRNOP00000012379"/>
<dbReference type="BindingDB" id="Q9JHG3"/>
<dbReference type="ChEMBL" id="CHEMBL2398"/>
<dbReference type="GuidetoPHARMACOLOGY" id="36"/>
<dbReference type="GlyCosmos" id="Q9JHG3">
    <property type="glycosylation" value="2 sites, No reported glycans"/>
</dbReference>
<dbReference type="GlyGen" id="Q9JHG3">
    <property type="glycosylation" value="2 sites"/>
</dbReference>
<dbReference type="PhosphoSitePlus" id="Q9JHG3"/>
<dbReference type="PaxDb" id="10116-ENSRNOP00000012379"/>
<dbReference type="Ensembl" id="ENSRNOT00000012379.5">
    <property type="protein sequence ID" value="ENSRNOP00000012379.4"/>
    <property type="gene ID" value="ENSRNOG00000009227.5"/>
</dbReference>
<dbReference type="GeneID" id="83518"/>
<dbReference type="KEGG" id="rno:83518"/>
<dbReference type="UCSC" id="RGD:621645">
    <property type="organism name" value="rat"/>
</dbReference>
<dbReference type="AGR" id="RGD:621645"/>
<dbReference type="CTD" id="187"/>
<dbReference type="RGD" id="621645">
    <property type="gene designation" value="Aplnr"/>
</dbReference>
<dbReference type="eggNOG" id="KOG3656">
    <property type="taxonomic scope" value="Eukaryota"/>
</dbReference>
<dbReference type="GeneTree" id="ENSGT01130000278303"/>
<dbReference type="HOGENOM" id="CLU_009579_8_1_1"/>
<dbReference type="InParanoid" id="Q9JHG3"/>
<dbReference type="OMA" id="YAWLGYH"/>
<dbReference type="OrthoDB" id="5974286at2759"/>
<dbReference type="PhylomeDB" id="Q9JHG3"/>
<dbReference type="TreeFam" id="TF330024"/>
<dbReference type="Reactome" id="R-RNO-375276">
    <property type="pathway name" value="Peptide ligand-binding receptors"/>
</dbReference>
<dbReference type="Reactome" id="R-RNO-418594">
    <property type="pathway name" value="G alpha (i) signalling events"/>
</dbReference>
<dbReference type="PRO" id="PR:Q9JHG3"/>
<dbReference type="Proteomes" id="UP000002494">
    <property type="component" value="Chromosome 3"/>
</dbReference>
<dbReference type="Bgee" id="ENSRNOG00000009227">
    <property type="expression patterns" value="Expressed in lung and 16 other cell types or tissues"/>
</dbReference>
<dbReference type="GO" id="GO:0005886">
    <property type="term" value="C:plasma membrane"/>
    <property type="evidence" value="ECO:0000314"/>
    <property type="project" value="UniProtKB"/>
</dbReference>
<dbReference type="GO" id="GO:0060182">
    <property type="term" value="F:apelin receptor activity"/>
    <property type="evidence" value="ECO:0000250"/>
    <property type="project" value="UniProtKB"/>
</dbReference>
<dbReference type="GO" id="GO:0008528">
    <property type="term" value="F:G protein-coupled peptide receptor activity"/>
    <property type="evidence" value="ECO:0000250"/>
    <property type="project" value="UniProtKB"/>
</dbReference>
<dbReference type="GO" id="GO:0004930">
    <property type="term" value="F:G protein-coupled receptor activity"/>
    <property type="evidence" value="ECO:0000304"/>
    <property type="project" value="RGD"/>
</dbReference>
<dbReference type="GO" id="GO:0140897">
    <property type="term" value="F:mechanoreceptor activity"/>
    <property type="evidence" value="ECO:0000314"/>
    <property type="project" value="UniProtKB"/>
</dbReference>
<dbReference type="GO" id="GO:0042277">
    <property type="term" value="F:peptide binding"/>
    <property type="evidence" value="ECO:0000304"/>
    <property type="project" value="RGD"/>
</dbReference>
<dbReference type="GO" id="GO:0007193">
    <property type="term" value="P:adenylate cyclase-inhibiting G protein-coupled receptor signaling pathway"/>
    <property type="evidence" value="ECO:0000315"/>
    <property type="project" value="UniProtKB"/>
</dbReference>
<dbReference type="GO" id="GO:0007512">
    <property type="term" value="P:adult heart development"/>
    <property type="evidence" value="ECO:0000266"/>
    <property type="project" value="RGD"/>
</dbReference>
<dbReference type="GO" id="GO:0001525">
    <property type="term" value="P:angiogenesis"/>
    <property type="evidence" value="ECO:0007669"/>
    <property type="project" value="UniProtKB-KW"/>
</dbReference>
<dbReference type="GO" id="GO:0035904">
    <property type="term" value="P:aorta development"/>
    <property type="evidence" value="ECO:0000266"/>
    <property type="project" value="RGD"/>
</dbReference>
<dbReference type="GO" id="GO:0060183">
    <property type="term" value="P:apelin receptor signaling pathway"/>
    <property type="evidence" value="ECO:0000250"/>
    <property type="project" value="UniProtKB"/>
</dbReference>
<dbReference type="GO" id="GO:0003171">
    <property type="term" value="P:atrioventricular valve development"/>
    <property type="evidence" value="ECO:0000266"/>
    <property type="project" value="RGD"/>
</dbReference>
<dbReference type="GO" id="GO:0001568">
    <property type="term" value="P:blood vessel development"/>
    <property type="evidence" value="ECO:0000318"/>
    <property type="project" value="GO_Central"/>
</dbReference>
<dbReference type="GO" id="GO:0060976">
    <property type="term" value="P:coronary vasculature development"/>
    <property type="evidence" value="ECO:0000250"/>
    <property type="project" value="UniProtKB"/>
</dbReference>
<dbReference type="GO" id="GO:0003272">
    <property type="term" value="P:endocardial cushion formation"/>
    <property type="evidence" value="ECO:0000266"/>
    <property type="project" value="RGD"/>
</dbReference>
<dbReference type="GO" id="GO:0007186">
    <property type="term" value="P:G protein-coupled receptor signaling pathway"/>
    <property type="evidence" value="ECO:0000315"/>
    <property type="project" value="UniProtKB"/>
</dbReference>
<dbReference type="GO" id="GO:0007369">
    <property type="term" value="P:gastrulation"/>
    <property type="evidence" value="ECO:0007669"/>
    <property type="project" value="UniProtKB-KW"/>
</dbReference>
<dbReference type="GO" id="GO:0007507">
    <property type="term" value="P:heart development"/>
    <property type="evidence" value="ECO:0000250"/>
    <property type="project" value="UniProtKB"/>
</dbReference>
<dbReference type="GO" id="GO:0001947">
    <property type="term" value="P:heart looping"/>
    <property type="evidence" value="ECO:0000266"/>
    <property type="project" value="RGD"/>
</dbReference>
<dbReference type="GO" id="GO:0043951">
    <property type="term" value="P:negative regulation of cAMP-mediated signaling"/>
    <property type="evidence" value="ECO:0000250"/>
    <property type="project" value="UniProtKB"/>
</dbReference>
<dbReference type="GO" id="GO:0010629">
    <property type="term" value="P:negative regulation of gene expression"/>
    <property type="evidence" value="ECO:0000266"/>
    <property type="project" value="RGD"/>
</dbReference>
<dbReference type="GO" id="GO:0045766">
    <property type="term" value="P:positive regulation of angiogenesis"/>
    <property type="evidence" value="ECO:0000250"/>
    <property type="project" value="UniProtKB"/>
</dbReference>
<dbReference type="GO" id="GO:1903589">
    <property type="term" value="P:positive regulation of blood vessel endothelial cell proliferation involved in sprouting angiogenesis"/>
    <property type="evidence" value="ECO:0000250"/>
    <property type="project" value="UniProtKB"/>
</dbReference>
<dbReference type="GO" id="GO:1904022">
    <property type="term" value="P:positive regulation of G protein-coupled receptor internalization"/>
    <property type="evidence" value="ECO:0000266"/>
    <property type="project" value="RGD"/>
</dbReference>
<dbReference type="GO" id="GO:0051281">
    <property type="term" value="P:positive regulation of release of sequestered calcium ion into cytosol"/>
    <property type="evidence" value="ECO:0000250"/>
    <property type="project" value="UniProtKB"/>
</dbReference>
<dbReference type="GO" id="GO:0050878">
    <property type="term" value="P:regulation of body fluid levels"/>
    <property type="evidence" value="ECO:0000315"/>
    <property type="project" value="RGD"/>
</dbReference>
<dbReference type="GO" id="GO:1903596">
    <property type="term" value="P:regulation of gap junction assembly"/>
    <property type="evidence" value="ECO:0000266"/>
    <property type="project" value="RGD"/>
</dbReference>
<dbReference type="GO" id="GO:0010468">
    <property type="term" value="P:regulation of gene expression"/>
    <property type="evidence" value="ECO:0000266"/>
    <property type="project" value="RGD"/>
</dbReference>
<dbReference type="GO" id="GO:0035886">
    <property type="term" value="P:vascular associated smooth muscle cell differentiation"/>
    <property type="evidence" value="ECO:0000266"/>
    <property type="project" value="RGD"/>
</dbReference>
<dbReference type="GO" id="GO:0001944">
    <property type="term" value="P:vasculature development"/>
    <property type="evidence" value="ECO:0000266"/>
    <property type="project" value="RGD"/>
</dbReference>
<dbReference type="GO" id="GO:0001570">
    <property type="term" value="P:vasculogenesis"/>
    <property type="evidence" value="ECO:0000250"/>
    <property type="project" value="UniProtKB"/>
</dbReference>
<dbReference type="GO" id="GO:0060841">
    <property type="term" value="P:venous blood vessel development"/>
    <property type="evidence" value="ECO:0000266"/>
    <property type="project" value="RGD"/>
</dbReference>
<dbReference type="GO" id="GO:0060412">
    <property type="term" value="P:ventricular septum morphogenesis"/>
    <property type="evidence" value="ECO:0000266"/>
    <property type="project" value="RGD"/>
</dbReference>
<dbReference type="CDD" id="cd15190">
    <property type="entry name" value="7tmA_Apelin_R"/>
    <property type="match status" value="1"/>
</dbReference>
<dbReference type="FunFam" id="1.20.1070.10:FF:000106">
    <property type="entry name" value="Apelin receptor a"/>
    <property type="match status" value="1"/>
</dbReference>
<dbReference type="Gene3D" id="1.20.1070.10">
    <property type="entry name" value="Rhodopsin 7-helix transmembrane proteins"/>
    <property type="match status" value="1"/>
</dbReference>
<dbReference type="InterPro" id="IPR003904">
    <property type="entry name" value="Apelin_rcpt"/>
</dbReference>
<dbReference type="InterPro" id="IPR050119">
    <property type="entry name" value="CCR1-9-like"/>
</dbReference>
<dbReference type="InterPro" id="IPR000276">
    <property type="entry name" value="GPCR_Rhodpsn"/>
</dbReference>
<dbReference type="InterPro" id="IPR017452">
    <property type="entry name" value="GPCR_Rhodpsn_7TM"/>
</dbReference>
<dbReference type="PANTHER" id="PTHR10489:SF953">
    <property type="entry name" value="APELIN RECEPTOR"/>
    <property type="match status" value="1"/>
</dbReference>
<dbReference type="PANTHER" id="PTHR10489">
    <property type="entry name" value="CELL ADHESION MOLECULE"/>
    <property type="match status" value="1"/>
</dbReference>
<dbReference type="Pfam" id="PF00001">
    <property type="entry name" value="7tm_1"/>
    <property type="match status" value="1"/>
</dbReference>
<dbReference type="PRINTS" id="PR01416">
    <property type="entry name" value="APJRECEPTOR"/>
</dbReference>
<dbReference type="PRINTS" id="PR00237">
    <property type="entry name" value="GPCRRHODOPSN"/>
</dbReference>
<dbReference type="SUPFAM" id="SSF81321">
    <property type="entry name" value="Family A G protein-coupled receptor-like"/>
    <property type="match status" value="1"/>
</dbReference>
<dbReference type="PROSITE" id="PS00237">
    <property type="entry name" value="G_PROTEIN_RECEP_F1_1"/>
    <property type="match status" value="1"/>
</dbReference>
<dbReference type="PROSITE" id="PS50262">
    <property type="entry name" value="G_PROTEIN_RECEP_F1_2"/>
    <property type="match status" value="1"/>
</dbReference>
<feature type="chain" id="PRO_0000069176" description="Apelin receptor">
    <location>
        <begin position="1"/>
        <end position="377"/>
    </location>
</feature>
<feature type="topological domain" description="Extracellular" evidence="10">
    <location>
        <begin position="1"/>
        <end position="28"/>
    </location>
</feature>
<feature type="transmembrane region" description="Helical; Name=1" evidence="1">
    <location>
        <begin position="29"/>
        <end position="52"/>
    </location>
</feature>
<feature type="topological domain" description="Cytoplasmic" evidence="10">
    <location>
        <begin position="53"/>
        <end position="62"/>
    </location>
</feature>
<feature type="transmembrane region" description="Helical; Name=2" evidence="1">
    <location>
        <begin position="63"/>
        <end position="84"/>
    </location>
</feature>
<feature type="topological domain" description="Extracellular" evidence="10">
    <location>
        <begin position="85"/>
        <end position="97"/>
    </location>
</feature>
<feature type="transmembrane region" description="Helical; Name=3" evidence="1">
    <location>
        <begin position="98"/>
        <end position="123"/>
    </location>
</feature>
<feature type="topological domain" description="Cytoplasmic" evidence="10">
    <location>
        <begin position="124"/>
        <end position="144"/>
    </location>
</feature>
<feature type="transmembrane region" description="Helical; Name=4" evidence="1">
    <location>
        <begin position="145"/>
        <end position="162"/>
    </location>
</feature>
<feature type="topological domain" description="Extracellular" evidence="10">
    <location>
        <begin position="163"/>
        <end position="196"/>
    </location>
</feature>
<feature type="transmembrane region" description="Helical; Name=5" evidence="1">
    <location>
        <begin position="197"/>
        <end position="221"/>
    </location>
</feature>
<feature type="topological domain" description="Cytoplasmic" evidence="10">
    <location>
        <begin position="222"/>
        <end position="244"/>
    </location>
</feature>
<feature type="transmembrane region" description="Helical; Name=6" evidence="1">
    <location>
        <begin position="245"/>
        <end position="268"/>
    </location>
</feature>
<feature type="topological domain" description="Extracellular" evidence="10">
    <location>
        <begin position="269"/>
        <end position="287"/>
    </location>
</feature>
<feature type="transmembrane region" description="Helical; Name=7" evidence="1">
    <location>
        <begin position="288"/>
        <end position="310"/>
    </location>
</feature>
<feature type="topological domain" description="Cytoplasmic" evidence="10">
    <location>
        <begin position="311"/>
        <end position="377"/>
    </location>
</feature>
<feature type="region of interest" description="Disordered" evidence="7">
    <location>
        <begin position="335"/>
        <end position="377"/>
    </location>
</feature>
<feature type="compositionally biased region" description="Low complexity" evidence="7">
    <location>
        <begin position="335"/>
        <end position="349"/>
    </location>
</feature>
<feature type="site" description="Required for APELA and APLN/apelin-13 interaction and signaling" evidence="1">
    <location>
        <position position="83"/>
    </location>
</feature>
<feature type="site" description="Required for APELA and APLN/apelin-13 interaction and signaling" evidence="1">
    <location>
        <position position="166"/>
    </location>
</feature>
<feature type="glycosylation site" description="N-linked (GlcNAc...) asparagine" evidence="5">
    <location>
        <position position="13"/>
    </location>
</feature>
<feature type="glycosylation site" description="N-linked (GlcNAc...) asparagine" evidence="5">
    <location>
        <position position="173"/>
    </location>
</feature>
<feature type="disulfide bond" evidence="1">
    <location>
        <begin position="17"/>
        <end position="279"/>
    </location>
</feature>
<feature type="disulfide bond" evidence="1">
    <location>
        <begin position="100"/>
        <end position="179"/>
    </location>
</feature>
<feature type="sequence conflict" description="In Ref. 5; AAG24468." evidence="10" ref="5">
    <original>C</original>
    <variation>W</variation>
    <location>
        <position position="117"/>
    </location>
</feature>
<feature type="sequence conflict" description="In Ref. 5; AAG24468." evidence="10" ref="5">
    <original>A</original>
    <variation>G</variation>
    <location>
        <position position="187"/>
    </location>
</feature>
<feature type="sequence conflict" description="In Ref. 5; AAG24468." evidence="10" ref="5">
    <original>G</original>
    <variation>R</variation>
    <location>
        <position position="198"/>
    </location>
</feature>
<feature type="sequence conflict" description="In Ref. 5; AAG24468." evidence="10" ref="5">
    <original>L</original>
    <variation>P</variation>
    <location>
        <position position="251"/>
    </location>
</feature>
<sequence>MEDDGYNYYGADNQSECDYADWTPSGALIPAIYILVFLLGTTGNGLVLWTVFWSSREKRRSADIFIASLAVADLTFVVTLPLWATYTYREFDWPFGTFSCKLSSYLIFVNMYASVFCLTGLSFDRYLAIVRPVANARLRLRVSGAVATAVLWVLAALLAVPVMVFRSTDIPENSTKTQCYMDYSMVATSNSEWAWEVGLGVSSTAVGFVVPFIIMLTCYFFIAQTIAGHFRKERIEGLRKRRRLLSIIVVLVVTFALCWMPYHLVKTLYMLGNLLHWPCDFDSFLMNVFPYCTCISYVNSCLNPFLYAFFDPRFRRACTSMLCCDQSGCKGSPHSSSAEKSASYSSGHSQGPGPNMCKGGEPMHEKSIPYSQETLVD</sequence>
<proteinExistence type="evidence at transcript level"/>
<reference key="1">
    <citation type="journal article" date="2000" name="J. Biol. Chem.">
        <title>Molecular and functional characteristics of APJ: tissue distribution of mRNA and interaction with the endogenous ligand apelin.</title>
        <authorList>
            <person name="Hosoya M."/>
            <person name="Kawamata Y."/>
            <person name="Fukusumi S."/>
            <person name="Fujii R."/>
            <person name="Habata Y."/>
            <person name="Hinuma S."/>
            <person name="Kitada C."/>
            <person name="Honda S."/>
            <person name="Kurokawa T."/>
            <person name="Onda H."/>
            <person name="Nishimura O."/>
            <person name="Fujino M."/>
        </authorList>
    </citation>
    <scope>NUCLEOTIDE SEQUENCE [MRNA]</scope>
    <source>
        <tissue>Brain</tissue>
    </source>
</reference>
<reference key="2">
    <citation type="journal article" date="2000" name="Biochim. Biophys. Acta">
        <title>Distribution of mRNA encoding B78/apj, the rat homologue of the human APJ receptor, and its endogenous ligand apelin in brain and peripheral tissues.</title>
        <authorList>
            <person name="O'Carroll A.-M."/>
            <person name="Selby T.L."/>
            <person name="Palkovits M."/>
            <person name="Lolait S.J."/>
        </authorList>
    </citation>
    <scope>NUCLEOTIDE SEQUENCE [MRNA]</scope>
    <source>
        <strain>Sprague-Dawley</strain>
        <tissue>Pituitary</tissue>
    </source>
</reference>
<reference key="3">
    <citation type="journal article" date="2000" name="Neuroendocrinology">
        <title>Cloning, pharmacological characterization and brain distribution of the rat apelin receptor.</title>
        <authorList>
            <person name="De Mota N."/>
            <person name="Lenkei Z."/>
            <person name="Llorens-Cortes C."/>
        </authorList>
    </citation>
    <scope>NUCLEOTIDE SEQUENCE [MRNA]</scope>
    <source>
        <tissue>Brain</tissue>
    </source>
</reference>
<reference key="4">
    <citation type="journal article" date="2004" name="Genome Res.">
        <title>The status, quality, and expansion of the NIH full-length cDNA project: the Mammalian Gene Collection (MGC).</title>
        <authorList>
            <consortium name="The MGC Project Team"/>
        </authorList>
    </citation>
    <scope>NUCLEOTIDE SEQUENCE [LARGE SCALE MRNA]</scope>
    <source>
        <tissue>Lung</tissue>
    </source>
</reference>
<reference key="5">
    <citation type="submission" date="1998-09" db="EMBL/GenBank/DDBJ databases">
        <title>Identification and characterization of novel G-protein coupled receptors expressed in regenerating peripheral nerve.</title>
        <authorList>
            <person name="Carroll S.L."/>
            <person name="Miller M.L."/>
            <person name="Benedict-Hamilton H.M."/>
        </authorList>
    </citation>
    <scope>NUCLEOTIDE SEQUENCE [MRNA] OF 75-300</scope>
    <source>
        <strain>Sprague-Dawley</strain>
    </source>
</reference>
<reference key="6">
    <citation type="journal article" date="2001" name="J. Neurochem.">
        <title>Physiological role of a novel neuropeptide, apelin, and its receptor in the rat brain.</title>
        <authorList>
            <person name="Reaux A."/>
            <person name="De Mota N."/>
            <person name="Skultetyova I."/>
            <person name="Lenkei Z."/>
            <person name="El Messari S."/>
            <person name="Gallatz K."/>
            <person name="Corvol P."/>
            <person name="Palkovits M."/>
            <person name="Llorens-Cortes C."/>
        </authorList>
    </citation>
    <scope>FUNCTION</scope>
    <scope>SUBCELLULAR LOCATION</scope>
    <scope>TISSUE SPECIFICITY</scope>
    <scope>DEVELOPMENTAL STAGE</scope>
</reference>
<reference key="7">
    <citation type="journal article" date="2012" name="Nature">
        <title>APJ acts as a dual receptor in cardiac hypertrophy.</title>
        <authorList>
            <person name="Scimia M.C."/>
            <person name="Hurtado C."/>
            <person name="Ray S."/>
            <person name="Metzler S."/>
            <person name="Wei K."/>
            <person name="Wang J."/>
            <person name="Woods C.E."/>
            <person name="Purcell N.H."/>
            <person name="Catalucci D."/>
            <person name="Akasaka T."/>
            <person name="Bueno O.F."/>
            <person name="Vlasuk G.P."/>
            <person name="Kaliman P."/>
            <person name="Bodmer R."/>
            <person name="Smith L.H."/>
            <person name="Ashley E."/>
            <person name="Mercola M."/>
            <person name="Brown J.H."/>
            <person name="Ruiz-Lozano P."/>
        </authorList>
    </citation>
    <scope>FUNCTION</scope>
</reference>